<sequence length="160" mass="18206">MAKQKKHPTGTIAQNKKARHDYFIEHKFEAGLVLSGWEVKSLRAGKAHLTDSYVLLKDGEAWLFGSHITPLTTASTHVIADPIRSRKLLLNKRELERVEAAVAQKGYTCVALALYWSKHLIKCEIALGKGKKEFDKRDTVRERDSNRELQRAVRNKGKED</sequence>
<organism>
    <name type="scientific">Pseudomonas putida (strain W619)</name>
    <dbReference type="NCBI Taxonomy" id="390235"/>
    <lineage>
        <taxon>Bacteria</taxon>
        <taxon>Pseudomonadati</taxon>
        <taxon>Pseudomonadota</taxon>
        <taxon>Gammaproteobacteria</taxon>
        <taxon>Pseudomonadales</taxon>
        <taxon>Pseudomonadaceae</taxon>
        <taxon>Pseudomonas</taxon>
    </lineage>
</organism>
<name>SSRP_PSEPW</name>
<gene>
    <name evidence="1" type="primary">smpB</name>
    <name type="ordered locus">PputW619_0698</name>
</gene>
<keyword id="KW-0963">Cytoplasm</keyword>
<keyword id="KW-0694">RNA-binding</keyword>
<comment type="function">
    <text evidence="1">Required for rescue of stalled ribosomes mediated by trans-translation. Binds to transfer-messenger RNA (tmRNA), required for stable association of tmRNA with ribosomes. tmRNA and SmpB together mimic tRNA shape, replacing the anticodon stem-loop with SmpB. tmRNA is encoded by the ssrA gene; the 2 termini fold to resemble tRNA(Ala) and it encodes a 'tag peptide', a short internal open reading frame. During trans-translation Ala-aminoacylated tmRNA acts like a tRNA, entering the A-site of stalled ribosomes, displacing the stalled mRNA. The ribosome then switches to translate the ORF on the tmRNA; the nascent peptide is terminated with the 'tag peptide' encoded by the tmRNA and targeted for degradation. The ribosome is freed to recommence translation, which seems to be the essential function of trans-translation.</text>
</comment>
<comment type="subcellular location">
    <subcellularLocation>
        <location evidence="1">Cytoplasm</location>
    </subcellularLocation>
    <text evidence="1">The tmRNA-SmpB complex associates with stalled 70S ribosomes.</text>
</comment>
<comment type="similarity">
    <text evidence="1">Belongs to the SmpB family.</text>
</comment>
<reference key="1">
    <citation type="submission" date="2008-02" db="EMBL/GenBank/DDBJ databases">
        <title>Complete sequence of Pseudomonas putida W619.</title>
        <authorList>
            <person name="Copeland A."/>
            <person name="Lucas S."/>
            <person name="Lapidus A."/>
            <person name="Barry K."/>
            <person name="Detter J.C."/>
            <person name="Glavina del Rio T."/>
            <person name="Dalin E."/>
            <person name="Tice H."/>
            <person name="Pitluck S."/>
            <person name="Chain P."/>
            <person name="Malfatti S."/>
            <person name="Shin M."/>
            <person name="Vergez L."/>
            <person name="Schmutz J."/>
            <person name="Larimer F."/>
            <person name="Land M."/>
            <person name="Hauser L."/>
            <person name="Kyrpides N."/>
            <person name="Kim E."/>
            <person name="Taghavi S."/>
            <person name="Vangronsveld D."/>
            <person name="van der Lelie D."/>
            <person name="Richardson P."/>
        </authorList>
    </citation>
    <scope>NUCLEOTIDE SEQUENCE [LARGE SCALE GENOMIC DNA]</scope>
    <source>
        <strain>W619</strain>
    </source>
</reference>
<proteinExistence type="inferred from homology"/>
<evidence type="ECO:0000255" key="1">
    <source>
        <dbReference type="HAMAP-Rule" id="MF_00023"/>
    </source>
</evidence>
<evidence type="ECO:0000256" key="2">
    <source>
        <dbReference type="SAM" id="MobiDB-lite"/>
    </source>
</evidence>
<dbReference type="EMBL" id="CP000949">
    <property type="protein sequence ID" value="ACA71203.1"/>
    <property type="molecule type" value="Genomic_DNA"/>
</dbReference>
<dbReference type="SMR" id="B1J247"/>
<dbReference type="STRING" id="390235.PputW619_0698"/>
<dbReference type="KEGG" id="ppw:PputW619_0698"/>
<dbReference type="eggNOG" id="COG0691">
    <property type="taxonomic scope" value="Bacteria"/>
</dbReference>
<dbReference type="HOGENOM" id="CLU_108953_3_0_6"/>
<dbReference type="OrthoDB" id="9805462at2"/>
<dbReference type="GO" id="GO:0005829">
    <property type="term" value="C:cytosol"/>
    <property type="evidence" value="ECO:0007669"/>
    <property type="project" value="TreeGrafter"/>
</dbReference>
<dbReference type="GO" id="GO:0003723">
    <property type="term" value="F:RNA binding"/>
    <property type="evidence" value="ECO:0007669"/>
    <property type="project" value="UniProtKB-UniRule"/>
</dbReference>
<dbReference type="GO" id="GO:0070929">
    <property type="term" value="P:trans-translation"/>
    <property type="evidence" value="ECO:0007669"/>
    <property type="project" value="UniProtKB-UniRule"/>
</dbReference>
<dbReference type="CDD" id="cd09294">
    <property type="entry name" value="SmpB"/>
    <property type="match status" value="1"/>
</dbReference>
<dbReference type="Gene3D" id="2.40.280.10">
    <property type="match status" value="1"/>
</dbReference>
<dbReference type="HAMAP" id="MF_00023">
    <property type="entry name" value="SmpB"/>
    <property type="match status" value="1"/>
</dbReference>
<dbReference type="InterPro" id="IPR023620">
    <property type="entry name" value="SmpB"/>
</dbReference>
<dbReference type="InterPro" id="IPR000037">
    <property type="entry name" value="SsrA-bd_prot"/>
</dbReference>
<dbReference type="InterPro" id="IPR020081">
    <property type="entry name" value="SsrA-bd_prot_CS"/>
</dbReference>
<dbReference type="NCBIfam" id="NF003843">
    <property type="entry name" value="PRK05422.1"/>
    <property type="match status" value="1"/>
</dbReference>
<dbReference type="NCBIfam" id="TIGR00086">
    <property type="entry name" value="smpB"/>
    <property type="match status" value="1"/>
</dbReference>
<dbReference type="PANTHER" id="PTHR30308:SF2">
    <property type="entry name" value="SSRA-BINDING PROTEIN"/>
    <property type="match status" value="1"/>
</dbReference>
<dbReference type="PANTHER" id="PTHR30308">
    <property type="entry name" value="TMRNA-BINDING COMPONENT OF TRANS-TRANSLATION TAGGING COMPLEX"/>
    <property type="match status" value="1"/>
</dbReference>
<dbReference type="Pfam" id="PF01668">
    <property type="entry name" value="SmpB"/>
    <property type="match status" value="1"/>
</dbReference>
<dbReference type="SUPFAM" id="SSF74982">
    <property type="entry name" value="Small protein B (SmpB)"/>
    <property type="match status" value="1"/>
</dbReference>
<dbReference type="PROSITE" id="PS01317">
    <property type="entry name" value="SSRP"/>
    <property type="match status" value="1"/>
</dbReference>
<accession>B1J247</accession>
<protein>
    <recommendedName>
        <fullName evidence="1">SsrA-binding protein</fullName>
    </recommendedName>
    <alternativeName>
        <fullName evidence="1">Small protein B</fullName>
    </alternativeName>
</protein>
<feature type="chain" id="PRO_1000090174" description="SsrA-binding protein">
    <location>
        <begin position="1"/>
        <end position="160"/>
    </location>
</feature>
<feature type="region of interest" description="Disordered" evidence="2">
    <location>
        <begin position="136"/>
        <end position="160"/>
    </location>
</feature>